<name>MIAA_COXBU</name>
<protein>
    <recommendedName>
        <fullName evidence="1">tRNA dimethylallyltransferase</fullName>
        <ecNumber evidence="1">2.5.1.75</ecNumber>
    </recommendedName>
    <alternativeName>
        <fullName evidence="1">Dimethylallyl diphosphate:tRNA dimethylallyltransferase</fullName>
        <shortName evidence="1">DMAPP:tRNA dimethylallyltransferase</shortName>
        <shortName evidence="1">DMATase</shortName>
    </alternativeName>
    <alternativeName>
        <fullName evidence="1">Isopentenyl-diphosphate:tRNA isopentenyltransferase</fullName>
        <shortName evidence="1">IPP transferase</shortName>
        <shortName evidence="1">IPPT</shortName>
        <shortName evidence="1">IPTase</shortName>
    </alternativeName>
</protein>
<feature type="chain" id="PRO_0000163909" description="tRNA dimethylallyltransferase">
    <location>
        <begin position="1"/>
        <end position="311"/>
    </location>
</feature>
<feature type="region of interest" description="Interaction with substrate tRNA" evidence="1">
    <location>
        <begin position="37"/>
        <end position="40"/>
    </location>
</feature>
<feature type="region of interest" description="Interaction with substrate tRNA" evidence="1">
    <location>
        <begin position="161"/>
        <end position="165"/>
    </location>
</feature>
<feature type="binding site" evidence="1">
    <location>
        <begin position="12"/>
        <end position="19"/>
    </location>
    <ligand>
        <name>ATP</name>
        <dbReference type="ChEBI" id="CHEBI:30616"/>
    </ligand>
</feature>
<feature type="binding site" evidence="1">
    <location>
        <begin position="14"/>
        <end position="19"/>
    </location>
    <ligand>
        <name>substrate</name>
    </ligand>
</feature>
<feature type="site" description="Interaction with substrate tRNA" evidence="1">
    <location>
        <position position="103"/>
    </location>
</feature>
<feature type="site" description="Interaction with substrate tRNA" evidence="1">
    <location>
        <position position="125"/>
    </location>
</feature>
<accession>Q820W3</accession>
<keyword id="KW-0067">ATP-binding</keyword>
<keyword id="KW-0460">Magnesium</keyword>
<keyword id="KW-0547">Nucleotide-binding</keyword>
<keyword id="KW-1185">Reference proteome</keyword>
<keyword id="KW-0808">Transferase</keyword>
<keyword id="KW-0819">tRNA processing</keyword>
<proteinExistence type="inferred from homology"/>
<reference key="1">
    <citation type="journal article" date="2003" name="Proc. Natl. Acad. Sci. U.S.A.">
        <title>Complete genome sequence of the Q-fever pathogen, Coxiella burnetii.</title>
        <authorList>
            <person name="Seshadri R."/>
            <person name="Paulsen I.T."/>
            <person name="Eisen J.A."/>
            <person name="Read T.D."/>
            <person name="Nelson K.E."/>
            <person name="Nelson W.C."/>
            <person name="Ward N.L."/>
            <person name="Tettelin H."/>
            <person name="Davidsen T.M."/>
            <person name="Beanan M.J."/>
            <person name="DeBoy R.T."/>
            <person name="Daugherty S.C."/>
            <person name="Brinkac L.M."/>
            <person name="Madupu R."/>
            <person name="Dodson R.J."/>
            <person name="Khouri H.M."/>
            <person name="Lee K.H."/>
            <person name="Carty H.A."/>
            <person name="Scanlan D."/>
            <person name="Heinzen R.A."/>
            <person name="Thompson H.A."/>
            <person name="Samuel J.E."/>
            <person name="Fraser C.M."/>
            <person name="Heidelberg J.F."/>
        </authorList>
    </citation>
    <scope>NUCLEOTIDE SEQUENCE [LARGE SCALE GENOMIC DNA]</scope>
    <source>
        <strain>RSA 493 / Nine Mile phase I</strain>
    </source>
</reference>
<gene>
    <name evidence="1" type="primary">miaA</name>
    <name type="ordered locus">CBU_1082</name>
</gene>
<comment type="function">
    <text evidence="1">Catalyzes the transfer of a dimethylallyl group onto the adenine at position 37 in tRNAs that read codons beginning with uridine, leading to the formation of N6-(dimethylallyl)adenosine (i(6)A).</text>
</comment>
<comment type="catalytic activity">
    <reaction evidence="1">
        <text>adenosine(37) in tRNA + dimethylallyl diphosphate = N(6)-dimethylallyladenosine(37) in tRNA + diphosphate</text>
        <dbReference type="Rhea" id="RHEA:26482"/>
        <dbReference type="Rhea" id="RHEA-COMP:10162"/>
        <dbReference type="Rhea" id="RHEA-COMP:10375"/>
        <dbReference type="ChEBI" id="CHEBI:33019"/>
        <dbReference type="ChEBI" id="CHEBI:57623"/>
        <dbReference type="ChEBI" id="CHEBI:74411"/>
        <dbReference type="ChEBI" id="CHEBI:74415"/>
        <dbReference type="EC" id="2.5.1.75"/>
    </reaction>
</comment>
<comment type="cofactor">
    <cofactor evidence="1">
        <name>Mg(2+)</name>
        <dbReference type="ChEBI" id="CHEBI:18420"/>
    </cofactor>
</comment>
<comment type="subunit">
    <text evidence="1">Monomer.</text>
</comment>
<comment type="similarity">
    <text evidence="1">Belongs to the IPP transferase family.</text>
</comment>
<evidence type="ECO:0000255" key="1">
    <source>
        <dbReference type="HAMAP-Rule" id="MF_00185"/>
    </source>
</evidence>
<organism>
    <name type="scientific">Coxiella burnetii (strain RSA 493 / Nine Mile phase I)</name>
    <dbReference type="NCBI Taxonomy" id="227377"/>
    <lineage>
        <taxon>Bacteria</taxon>
        <taxon>Pseudomonadati</taxon>
        <taxon>Pseudomonadota</taxon>
        <taxon>Gammaproteobacteria</taxon>
        <taxon>Legionellales</taxon>
        <taxon>Coxiellaceae</taxon>
        <taxon>Coxiella</taxon>
    </lineage>
</organism>
<sequence length="311" mass="35955">MNKNPFIVCLMGPTASGKTDLAIALARKLPFEIISVDSAMVYRGLDIGTAKPNEEELQLTSHRLINICDPSFPYSAGQFYKDALSEIKTIEIRNRTPLLVGGTMLYFHILEQGFSDLPTADETVRKKIQEEAAQHGWAKIHERLNAIDPKSAARINPNDAQRIQRAFEVYETTGQPLSSYQSLKRFKALPYQFINLILAPENRSWLHQRIEKRFDQMLKNNFLEEVRQLYNRGDLNSDLPAIRTVGYRQVWKYLSGEYDYETMRHKAIAATRQLAKRQLTWLRRWPDAKWFNSEDKDLISQVVDYLKGIGM</sequence>
<dbReference type="EC" id="2.5.1.75" evidence="1"/>
<dbReference type="EMBL" id="AE016828">
    <property type="protein sequence ID" value="AAO90595.1"/>
    <property type="molecule type" value="Genomic_DNA"/>
</dbReference>
<dbReference type="RefSeq" id="NP_820081.1">
    <property type="nucleotide sequence ID" value="NC_002971.4"/>
</dbReference>
<dbReference type="RefSeq" id="WP_005768333.1">
    <property type="nucleotide sequence ID" value="NZ_CCYB01000040.1"/>
</dbReference>
<dbReference type="SMR" id="Q820W3"/>
<dbReference type="STRING" id="227377.CBU_1082"/>
<dbReference type="DNASU" id="1208983"/>
<dbReference type="EnsemblBacteria" id="AAO90595">
    <property type="protein sequence ID" value="AAO90595"/>
    <property type="gene ID" value="CBU_1082"/>
</dbReference>
<dbReference type="GeneID" id="1208983"/>
<dbReference type="KEGG" id="cbu:CBU_1082"/>
<dbReference type="PATRIC" id="fig|227377.7.peg.1076"/>
<dbReference type="eggNOG" id="COG0324">
    <property type="taxonomic scope" value="Bacteria"/>
</dbReference>
<dbReference type="HOGENOM" id="CLU_032616_0_0_6"/>
<dbReference type="OrthoDB" id="9776390at2"/>
<dbReference type="Proteomes" id="UP000002671">
    <property type="component" value="Chromosome"/>
</dbReference>
<dbReference type="GO" id="GO:0005524">
    <property type="term" value="F:ATP binding"/>
    <property type="evidence" value="ECO:0007669"/>
    <property type="project" value="UniProtKB-UniRule"/>
</dbReference>
<dbReference type="GO" id="GO:0052381">
    <property type="term" value="F:tRNA dimethylallyltransferase activity"/>
    <property type="evidence" value="ECO:0000318"/>
    <property type="project" value="GO_Central"/>
</dbReference>
<dbReference type="GO" id="GO:0006400">
    <property type="term" value="P:tRNA modification"/>
    <property type="evidence" value="ECO:0000318"/>
    <property type="project" value="GO_Central"/>
</dbReference>
<dbReference type="FunFam" id="1.10.20.140:FF:000001">
    <property type="entry name" value="tRNA dimethylallyltransferase"/>
    <property type="match status" value="1"/>
</dbReference>
<dbReference type="Gene3D" id="1.10.20.140">
    <property type="match status" value="1"/>
</dbReference>
<dbReference type="Gene3D" id="3.40.50.300">
    <property type="entry name" value="P-loop containing nucleotide triphosphate hydrolases"/>
    <property type="match status" value="1"/>
</dbReference>
<dbReference type="HAMAP" id="MF_00185">
    <property type="entry name" value="IPP_trans"/>
    <property type="match status" value="1"/>
</dbReference>
<dbReference type="InterPro" id="IPR039657">
    <property type="entry name" value="Dimethylallyltransferase"/>
</dbReference>
<dbReference type="InterPro" id="IPR018022">
    <property type="entry name" value="IPT"/>
</dbReference>
<dbReference type="InterPro" id="IPR027417">
    <property type="entry name" value="P-loop_NTPase"/>
</dbReference>
<dbReference type="NCBIfam" id="TIGR00174">
    <property type="entry name" value="miaA"/>
    <property type="match status" value="1"/>
</dbReference>
<dbReference type="PANTHER" id="PTHR11088">
    <property type="entry name" value="TRNA DIMETHYLALLYLTRANSFERASE"/>
    <property type="match status" value="1"/>
</dbReference>
<dbReference type="PANTHER" id="PTHR11088:SF60">
    <property type="entry name" value="TRNA DIMETHYLALLYLTRANSFERASE"/>
    <property type="match status" value="1"/>
</dbReference>
<dbReference type="Pfam" id="PF01715">
    <property type="entry name" value="IPPT"/>
    <property type="match status" value="1"/>
</dbReference>
<dbReference type="SUPFAM" id="SSF52540">
    <property type="entry name" value="P-loop containing nucleoside triphosphate hydrolases"/>
    <property type="match status" value="2"/>
</dbReference>